<protein>
    <recommendedName>
        <fullName evidence="7">Spore development regulator vosA</fullName>
    </recommendedName>
</protein>
<proteinExistence type="evidence at protein level"/>
<feature type="chain" id="PRO_0000435915" description="Spore development regulator vosA">
    <location>
        <begin position="1"/>
        <end position="390"/>
    </location>
</feature>
<feature type="domain" description="Velvet" evidence="3">
    <location>
        <begin position="3"/>
        <end position="132"/>
    </location>
</feature>
<feature type="region of interest" description="Disordered" evidence="4">
    <location>
        <begin position="137"/>
        <end position="191"/>
    </location>
</feature>
<feature type="region of interest" description="Disordered" evidence="4">
    <location>
        <begin position="265"/>
        <end position="390"/>
    </location>
</feature>
<feature type="short sequence motif" description="Nuclear localization signal" evidence="1">
    <location>
        <begin position="273"/>
        <end position="280"/>
    </location>
</feature>
<feature type="compositionally biased region" description="Basic and acidic residues" evidence="4">
    <location>
        <begin position="137"/>
        <end position="149"/>
    </location>
</feature>
<feature type="compositionally biased region" description="Low complexity" evidence="4">
    <location>
        <begin position="165"/>
        <end position="175"/>
    </location>
</feature>
<feature type="compositionally biased region" description="Polar residues" evidence="4">
    <location>
        <begin position="350"/>
        <end position="364"/>
    </location>
</feature>
<feature type="compositionally biased region" description="Polar residues" evidence="4">
    <location>
        <begin position="371"/>
        <end position="390"/>
    </location>
</feature>
<sequence length="390" mass="42821">MLNNTSSDFDLIIRQQPNRARVAGGKEKEERPVPVAPSTALAGTLVSSLHRLKDVDNSDGGFFVFGDLSVKIEGEFRLKFTLFEMRKDRVSYLKTVISERFTVSPPKSFPGMMESTHLSRSFADQGVKLRIRKEPRTMLKRSTRPDEFHQPVPTRSPERQSVQIPPSSSYGGYPPAARDYGYYGQQPPVKRHRTSIDYGRQQGLYDVDGRMARQMDPYGQPTAAMYAGQPAAYQTPAAMQTYNTGQVVPDYTAMYPGMQASAGMQASAPMSQIPDPTGQSRSSQQQQAAVGQLMAMNQPGTPTPDSTGAMMAQGYARSGYPPSSTILPPLQRSRDYPQGTNGSARAYFDQTPQANTPILPSQMVNEGDRFSSVTGPTTFNHPDSPNGTPQ</sequence>
<dbReference type="EMBL" id="AM920437">
    <property type="protein sequence ID" value="CAP97977.1"/>
    <property type="molecule type" value="Genomic_DNA"/>
</dbReference>
<dbReference type="RefSeq" id="XP_002564715.1">
    <property type="nucleotide sequence ID" value="XM_002564669.1"/>
</dbReference>
<dbReference type="SMR" id="B6HQ74"/>
<dbReference type="STRING" id="500485.B6HQ74"/>
<dbReference type="VEuPathDB" id="FungiDB:PCH_Pc22g06890"/>
<dbReference type="eggNOG" id="ENOG502RYQD">
    <property type="taxonomic scope" value="Eukaryota"/>
</dbReference>
<dbReference type="HOGENOM" id="CLU_034766_1_0_1"/>
<dbReference type="OMA" id="CCSLYDA"/>
<dbReference type="OrthoDB" id="5599552at2759"/>
<dbReference type="BioCyc" id="PCHR:PC22G06890-MONOMER"/>
<dbReference type="Proteomes" id="UP000000724">
    <property type="component" value="Contig Pc00c22"/>
</dbReference>
<dbReference type="GO" id="GO:0005634">
    <property type="term" value="C:nucleus"/>
    <property type="evidence" value="ECO:0007669"/>
    <property type="project" value="UniProtKB-SubCell"/>
</dbReference>
<dbReference type="GO" id="GO:0030435">
    <property type="term" value="P:sporulation resulting in formation of a cellular spore"/>
    <property type="evidence" value="ECO:0007669"/>
    <property type="project" value="UniProtKB-KW"/>
</dbReference>
<dbReference type="Gene3D" id="2.60.40.3960">
    <property type="entry name" value="Velvet domain"/>
    <property type="match status" value="1"/>
</dbReference>
<dbReference type="InterPro" id="IPR021740">
    <property type="entry name" value="Velvet"/>
</dbReference>
<dbReference type="InterPro" id="IPR037525">
    <property type="entry name" value="Velvet_dom"/>
</dbReference>
<dbReference type="InterPro" id="IPR038491">
    <property type="entry name" value="Velvet_dom_sf"/>
</dbReference>
<dbReference type="PANTHER" id="PTHR33572">
    <property type="entry name" value="SPORE DEVELOPMENT REGULATOR VOSA"/>
    <property type="match status" value="1"/>
</dbReference>
<dbReference type="PANTHER" id="PTHR33572:SF18">
    <property type="entry name" value="SPORE DEVELOPMENT REGULATOR VOSA"/>
    <property type="match status" value="1"/>
</dbReference>
<dbReference type="Pfam" id="PF11754">
    <property type="entry name" value="Velvet"/>
    <property type="match status" value="1"/>
</dbReference>
<dbReference type="PROSITE" id="PS51821">
    <property type="entry name" value="VELVET"/>
    <property type="match status" value="1"/>
</dbReference>
<keyword id="KW-0539">Nucleus</keyword>
<keyword id="KW-1185">Reference proteome</keyword>
<keyword id="KW-0749">Sporulation</keyword>
<keyword id="KW-0804">Transcription</keyword>
<keyword id="KW-0805">Transcription regulation</keyword>
<gene>
    <name evidence="6" type="primary">vosA</name>
    <name type="ORF">Pc22g06890</name>
    <name type="ORF">PCH_Pc22g06890</name>
</gene>
<evidence type="ECO:0000250" key="1">
    <source>
        <dbReference type="UniProtKB" id="M2TGT8"/>
    </source>
</evidence>
<evidence type="ECO:0000250" key="2">
    <source>
        <dbReference type="UniProtKB" id="Q5BBX1"/>
    </source>
</evidence>
<evidence type="ECO:0000255" key="3">
    <source>
        <dbReference type="PROSITE-ProRule" id="PRU01165"/>
    </source>
</evidence>
<evidence type="ECO:0000256" key="4">
    <source>
        <dbReference type="SAM" id="MobiDB-lite"/>
    </source>
</evidence>
<evidence type="ECO:0000269" key="5">
    <source>
    </source>
</evidence>
<evidence type="ECO:0000303" key="6">
    <source>
    </source>
</evidence>
<evidence type="ECO:0000305" key="7"/>
<accession>B6HQ74</accession>
<reference key="1">
    <citation type="journal article" date="2008" name="Nat. Biotechnol.">
        <title>Genome sequencing and analysis of the filamentous fungus Penicillium chrysogenum.</title>
        <authorList>
            <person name="van den Berg M.A."/>
            <person name="Albang R."/>
            <person name="Albermann K."/>
            <person name="Badger J.H."/>
            <person name="Daran J.-M."/>
            <person name="Driessen A.J.M."/>
            <person name="Garcia-Estrada C."/>
            <person name="Fedorova N.D."/>
            <person name="Harris D.M."/>
            <person name="Heijne W.H.M."/>
            <person name="Joardar V.S."/>
            <person name="Kiel J.A.K.W."/>
            <person name="Kovalchuk A."/>
            <person name="Martin J.F."/>
            <person name="Nierman W.C."/>
            <person name="Nijland J.G."/>
            <person name="Pronk J.T."/>
            <person name="Roubos J.A."/>
            <person name="van der Klei I.J."/>
            <person name="van Peij N.N.M.E."/>
            <person name="Veenhuis M."/>
            <person name="von Doehren H."/>
            <person name="Wagner C."/>
            <person name="Wortman J.R."/>
            <person name="Bovenberg R.A.L."/>
        </authorList>
    </citation>
    <scope>NUCLEOTIDE SEQUENCE [LARGE SCALE GENOMIC DNA]</scope>
    <source>
        <strain>ATCC 28089 / DSM 1075 / NRRL 1951 / Wisconsin 54-1255</strain>
    </source>
</reference>
<reference key="2">
    <citation type="journal article" date="2013" name="Eukaryot. Cell">
        <title>Members of the Penicillium chrysogenum velvet complex play functionally opposing roles in the regulation of penicillin biosynthesis and conidiation.</title>
        <authorList>
            <person name="Kopke K."/>
            <person name="Hoff B."/>
            <person name="Bloemendal S."/>
            <person name="Katschorowski A."/>
            <person name="Kamerewerd J."/>
            <person name="Kueck U."/>
        </authorList>
    </citation>
    <scope>FUNCTION</scope>
    <scope>DISRUPTION PHENOTYPE</scope>
    <scope>SUBCELLULAR LOCATION</scope>
    <scope>INTERACTION WITH VELA; VELB AND VELC</scope>
</reference>
<comment type="function">
    <text evidence="2 5">Component of the velB-VosA heterodimeric complex that plays a dual role in activating genes associated with spore maturation and repressing certain development-associated genes (PubMed:23264641). The complex binds DNA through the DNA-binding domain of vosA that recognizes an 11-nucleotide consensus sequence 5'-CTGGCCGCGGC-3' consisting of two motifs in the promoters of key developmental regulatory genes (By similarity).</text>
</comment>
<comment type="subunit">
    <text evidence="2 5">Forms a heterodimeric complex with velB; the formation of the velB-vosA complex is light-dependent (By similarity). Interacts with velA, velB and velC (PubMed:23264641).</text>
</comment>
<comment type="subcellular location">
    <subcellularLocation>
        <location evidence="5">Nucleus</location>
    </subcellularLocation>
</comment>
<comment type="domain">
    <text evidence="2">The N-terminal velvet domain contains a NF-kappa-B-like fold and is involved in DNA-binding (By similarity).</text>
</comment>
<comment type="disruption phenotype">
    <text evidence="5">Results in a severe conidiation defect with reduced sporulation (PubMed:23264641).</text>
</comment>
<comment type="similarity">
    <text evidence="7">Belongs to the velvet family. VosA subfamily.</text>
</comment>
<organism>
    <name type="scientific">Penicillium rubens (strain ATCC 28089 / DSM 1075 / NRRL 1951 / Wisconsin 54-1255)</name>
    <name type="common">Penicillium chrysogenum</name>
    <dbReference type="NCBI Taxonomy" id="500485"/>
    <lineage>
        <taxon>Eukaryota</taxon>
        <taxon>Fungi</taxon>
        <taxon>Dikarya</taxon>
        <taxon>Ascomycota</taxon>
        <taxon>Pezizomycotina</taxon>
        <taxon>Eurotiomycetes</taxon>
        <taxon>Eurotiomycetidae</taxon>
        <taxon>Eurotiales</taxon>
        <taxon>Aspergillaceae</taxon>
        <taxon>Penicillium</taxon>
        <taxon>Penicillium chrysogenum species complex</taxon>
    </lineage>
</organism>
<name>VOSA_PENRW</name>